<reference key="1">
    <citation type="submission" date="2006-10" db="EMBL/GenBank/DDBJ databases">
        <title>Complete sequence of Syntrophobacter fumaroxidans MPOB.</title>
        <authorList>
            <consortium name="US DOE Joint Genome Institute"/>
            <person name="Copeland A."/>
            <person name="Lucas S."/>
            <person name="Lapidus A."/>
            <person name="Barry K."/>
            <person name="Detter J.C."/>
            <person name="Glavina del Rio T."/>
            <person name="Hammon N."/>
            <person name="Israni S."/>
            <person name="Pitluck S."/>
            <person name="Goltsman E.G."/>
            <person name="Martinez M."/>
            <person name="Schmutz J."/>
            <person name="Larimer F."/>
            <person name="Land M."/>
            <person name="Hauser L."/>
            <person name="Kyrpides N."/>
            <person name="Kim E."/>
            <person name="Boone D.R."/>
            <person name="Brockman F."/>
            <person name="Culley D."/>
            <person name="Ferry J."/>
            <person name="Gunsalus R."/>
            <person name="McInerney M.J."/>
            <person name="Morrison M."/>
            <person name="Plugge C."/>
            <person name="Rohlin L."/>
            <person name="Scholten J."/>
            <person name="Sieber J."/>
            <person name="Stams A.J.M."/>
            <person name="Worm P."/>
            <person name="Henstra A.M."/>
            <person name="Richardson P."/>
        </authorList>
    </citation>
    <scope>NUCLEOTIDE SEQUENCE [LARGE SCALE GENOMIC DNA]</scope>
    <source>
        <strain>DSM 10017 / MPOB</strain>
    </source>
</reference>
<name>CLPP_SYNFM</name>
<organism>
    <name type="scientific">Syntrophobacter fumaroxidans (strain DSM 10017 / MPOB)</name>
    <dbReference type="NCBI Taxonomy" id="335543"/>
    <lineage>
        <taxon>Bacteria</taxon>
        <taxon>Pseudomonadati</taxon>
        <taxon>Thermodesulfobacteriota</taxon>
        <taxon>Syntrophobacteria</taxon>
        <taxon>Syntrophobacterales</taxon>
        <taxon>Syntrophobacteraceae</taxon>
        <taxon>Syntrophobacter</taxon>
    </lineage>
</organism>
<protein>
    <recommendedName>
        <fullName evidence="1">ATP-dependent Clp protease proteolytic subunit</fullName>
        <ecNumber evidence="1">3.4.21.92</ecNumber>
    </recommendedName>
    <alternativeName>
        <fullName evidence="1">Endopeptidase Clp</fullName>
    </alternativeName>
</protein>
<evidence type="ECO:0000255" key="1">
    <source>
        <dbReference type="HAMAP-Rule" id="MF_00444"/>
    </source>
</evidence>
<feature type="chain" id="PRO_1000026140" description="ATP-dependent Clp protease proteolytic subunit">
    <location>
        <begin position="1"/>
        <end position="202"/>
    </location>
</feature>
<feature type="active site" description="Nucleophile" evidence="1">
    <location>
        <position position="98"/>
    </location>
</feature>
<feature type="active site" evidence="1">
    <location>
        <position position="123"/>
    </location>
</feature>
<proteinExistence type="inferred from homology"/>
<sequence>MSLIPIVVEQSSRGERAFDIYSRLLRDRIIFLGTAITDEVANVIIAQLLFLESEDPDKDIHFYINSPGGLVTAGLAIYDTMQFIKPNVSTLCMGQAASMAAILLAAGVKGKRYALPHVRIMLHQPMGGFQGQATDVEIQAKEILKLREELNDILVRHTGRPVEQIQRDTDRDFYMSGEQAREYGMVDHIFTSRLSILPSATS</sequence>
<gene>
    <name evidence="1" type="primary">clpP</name>
    <name type="ordered locus">Sfum_0100</name>
</gene>
<keyword id="KW-0963">Cytoplasm</keyword>
<keyword id="KW-0378">Hydrolase</keyword>
<keyword id="KW-0645">Protease</keyword>
<keyword id="KW-1185">Reference proteome</keyword>
<keyword id="KW-0720">Serine protease</keyword>
<dbReference type="EC" id="3.4.21.92" evidence="1"/>
<dbReference type="EMBL" id="CP000478">
    <property type="protein sequence ID" value="ABK15803.1"/>
    <property type="molecule type" value="Genomic_DNA"/>
</dbReference>
<dbReference type="RefSeq" id="WP_011696976.1">
    <property type="nucleotide sequence ID" value="NC_008554.1"/>
</dbReference>
<dbReference type="SMR" id="A0LEF1"/>
<dbReference type="FunCoup" id="A0LEF1">
    <property type="interactions" value="492"/>
</dbReference>
<dbReference type="STRING" id="335543.Sfum_0100"/>
<dbReference type="MEROPS" id="S14.001"/>
<dbReference type="KEGG" id="sfu:Sfum_0100"/>
<dbReference type="eggNOG" id="COG0740">
    <property type="taxonomic scope" value="Bacteria"/>
</dbReference>
<dbReference type="HOGENOM" id="CLU_058707_3_2_7"/>
<dbReference type="InParanoid" id="A0LEF1"/>
<dbReference type="OrthoDB" id="9802800at2"/>
<dbReference type="Proteomes" id="UP000001784">
    <property type="component" value="Chromosome"/>
</dbReference>
<dbReference type="GO" id="GO:0005737">
    <property type="term" value="C:cytoplasm"/>
    <property type="evidence" value="ECO:0007669"/>
    <property type="project" value="UniProtKB-SubCell"/>
</dbReference>
<dbReference type="GO" id="GO:0009368">
    <property type="term" value="C:endopeptidase Clp complex"/>
    <property type="evidence" value="ECO:0007669"/>
    <property type="project" value="TreeGrafter"/>
</dbReference>
<dbReference type="GO" id="GO:0004176">
    <property type="term" value="F:ATP-dependent peptidase activity"/>
    <property type="evidence" value="ECO:0007669"/>
    <property type="project" value="InterPro"/>
</dbReference>
<dbReference type="GO" id="GO:0051117">
    <property type="term" value="F:ATPase binding"/>
    <property type="evidence" value="ECO:0007669"/>
    <property type="project" value="TreeGrafter"/>
</dbReference>
<dbReference type="GO" id="GO:0004252">
    <property type="term" value="F:serine-type endopeptidase activity"/>
    <property type="evidence" value="ECO:0007669"/>
    <property type="project" value="UniProtKB-UniRule"/>
</dbReference>
<dbReference type="GO" id="GO:0006515">
    <property type="term" value="P:protein quality control for misfolded or incompletely synthesized proteins"/>
    <property type="evidence" value="ECO:0007669"/>
    <property type="project" value="TreeGrafter"/>
</dbReference>
<dbReference type="CDD" id="cd07017">
    <property type="entry name" value="S14_ClpP_2"/>
    <property type="match status" value="1"/>
</dbReference>
<dbReference type="FunFam" id="3.90.226.10:FF:000001">
    <property type="entry name" value="ATP-dependent Clp protease proteolytic subunit"/>
    <property type="match status" value="1"/>
</dbReference>
<dbReference type="Gene3D" id="3.90.226.10">
    <property type="entry name" value="2-enoyl-CoA Hydratase, Chain A, domain 1"/>
    <property type="match status" value="1"/>
</dbReference>
<dbReference type="HAMAP" id="MF_00444">
    <property type="entry name" value="ClpP"/>
    <property type="match status" value="1"/>
</dbReference>
<dbReference type="InterPro" id="IPR001907">
    <property type="entry name" value="ClpP"/>
</dbReference>
<dbReference type="InterPro" id="IPR029045">
    <property type="entry name" value="ClpP/crotonase-like_dom_sf"/>
</dbReference>
<dbReference type="InterPro" id="IPR023562">
    <property type="entry name" value="ClpP/TepA"/>
</dbReference>
<dbReference type="InterPro" id="IPR033135">
    <property type="entry name" value="ClpP_His_AS"/>
</dbReference>
<dbReference type="InterPro" id="IPR018215">
    <property type="entry name" value="ClpP_Ser_AS"/>
</dbReference>
<dbReference type="NCBIfam" id="TIGR00493">
    <property type="entry name" value="clpP"/>
    <property type="match status" value="1"/>
</dbReference>
<dbReference type="NCBIfam" id="NF001368">
    <property type="entry name" value="PRK00277.1"/>
    <property type="match status" value="1"/>
</dbReference>
<dbReference type="NCBIfam" id="NF009205">
    <property type="entry name" value="PRK12553.1"/>
    <property type="match status" value="1"/>
</dbReference>
<dbReference type="PANTHER" id="PTHR10381">
    <property type="entry name" value="ATP-DEPENDENT CLP PROTEASE PROTEOLYTIC SUBUNIT"/>
    <property type="match status" value="1"/>
</dbReference>
<dbReference type="PANTHER" id="PTHR10381:SF70">
    <property type="entry name" value="ATP-DEPENDENT CLP PROTEASE PROTEOLYTIC SUBUNIT"/>
    <property type="match status" value="1"/>
</dbReference>
<dbReference type="Pfam" id="PF00574">
    <property type="entry name" value="CLP_protease"/>
    <property type="match status" value="1"/>
</dbReference>
<dbReference type="PRINTS" id="PR00127">
    <property type="entry name" value="CLPPROTEASEP"/>
</dbReference>
<dbReference type="SUPFAM" id="SSF52096">
    <property type="entry name" value="ClpP/crotonase"/>
    <property type="match status" value="1"/>
</dbReference>
<dbReference type="PROSITE" id="PS00382">
    <property type="entry name" value="CLP_PROTEASE_HIS"/>
    <property type="match status" value="1"/>
</dbReference>
<dbReference type="PROSITE" id="PS00381">
    <property type="entry name" value="CLP_PROTEASE_SER"/>
    <property type="match status" value="1"/>
</dbReference>
<comment type="function">
    <text evidence="1">Cleaves peptides in various proteins in a process that requires ATP hydrolysis. Has a chymotrypsin-like activity. Plays a major role in the degradation of misfolded proteins.</text>
</comment>
<comment type="catalytic activity">
    <reaction evidence="1">
        <text>Hydrolysis of proteins to small peptides in the presence of ATP and magnesium. alpha-casein is the usual test substrate. In the absence of ATP, only oligopeptides shorter than five residues are hydrolyzed (such as succinyl-Leu-Tyr-|-NHMec, and Leu-Tyr-Leu-|-Tyr-Trp, in which cleavage of the -Tyr-|-Leu- and -Tyr-|-Trp bonds also occurs).</text>
        <dbReference type="EC" id="3.4.21.92"/>
    </reaction>
</comment>
<comment type="subunit">
    <text evidence="1">Fourteen ClpP subunits assemble into 2 heptameric rings which stack back to back to give a disk-like structure with a central cavity, resembling the structure of eukaryotic proteasomes.</text>
</comment>
<comment type="subcellular location">
    <subcellularLocation>
        <location evidence="1">Cytoplasm</location>
    </subcellularLocation>
</comment>
<comment type="similarity">
    <text evidence="1">Belongs to the peptidase S14 family.</text>
</comment>
<accession>A0LEF1</accession>